<sequence length="206" mass="22427">MEFNVKTLEGKDAGKVSLSDAIFGLEPREDILARVIRWQLAKKQQGTHKAKGRAEVSRTGAKMYKQKGTGRARHHSARAPQFRGGGKAHGPVVRSHEHDLPKKVRALGLRHALSAKIKADDVIVIDNLVAAEAKTKSLASVFETLGLTNALFIGGAELDGNFKLAAQNIPNIDVLPIQGINVYDIVRRGKLVLSKAAVEALEERFK</sequence>
<reference key="1">
    <citation type="journal article" date="2006" name="Genome Biol.">
        <title>The genome of Rhizobium leguminosarum has recognizable core and accessory components.</title>
        <authorList>
            <person name="Young J.P.W."/>
            <person name="Crossman L.C."/>
            <person name="Johnston A.W.B."/>
            <person name="Thomson N.R."/>
            <person name="Ghazoui Z.F."/>
            <person name="Hull K.H."/>
            <person name="Wexler M."/>
            <person name="Curson A.R.J."/>
            <person name="Todd J.D."/>
            <person name="Poole P.S."/>
            <person name="Mauchline T.H."/>
            <person name="East A.K."/>
            <person name="Quail M.A."/>
            <person name="Churcher C."/>
            <person name="Arrowsmith C."/>
            <person name="Cherevach I."/>
            <person name="Chillingworth T."/>
            <person name="Clarke K."/>
            <person name="Cronin A."/>
            <person name="Davis P."/>
            <person name="Fraser A."/>
            <person name="Hance Z."/>
            <person name="Hauser H."/>
            <person name="Jagels K."/>
            <person name="Moule S."/>
            <person name="Mungall K."/>
            <person name="Norbertczak H."/>
            <person name="Rabbinowitsch E."/>
            <person name="Sanders M."/>
            <person name="Simmonds M."/>
            <person name="Whitehead S."/>
            <person name="Parkhill J."/>
        </authorList>
    </citation>
    <scope>NUCLEOTIDE SEQUENCE [LARGE SCALE GENOMIC DNA]</scope>
    <source>
        <strain>DSM 114642 / LMG 32736 / 3841</strain>
    </source>
</reference>
<keyword id="KW-0687">Ribonucleoprotein</keyword>
<keyword id="KW-0689">Ribosomal protein</keyword>
<keyword id="KW-0694">RNA-binding</keyword>
<keyword id="KW-0699">rRNA-binding</keyword>
<organism>
    <name type="scientific">Rhizobium johnstonii (strain DSM 114642 / LMG 32736 / 3841)</name>
    <name type="common">Rhizobium leguminosarum bv. viciae</name>
    <dbReference type="NCBI Taxonomy" id="216596"/>
    <lineage>
        <taxon>Bacteria</taxon>
        <taxon>Pseudomonadati</taxon>
        <taxon>Pseudomonadota</taxon>
        <taxon>Alphaproteobacteria</taxon>
        <taxon>Hyphomicrobiales</taxon>
        <taxon>Rhizobiaceae</taxon>
        <taxon>Rhizobium/Agrobacterium group</taxon>
        <taxon>Rhizobium</taxon>
        <taxon>Rhizobium johnstonii</taxon>
    </lineage>
</organism>
<proteinExistence type="inferred from homology"/>
<dbReference type="EMBL" id="AM236080">
    <property type="protein sequence ID" value="CAK07270.1"/>
    <property type="molecule type" value="Genomic_DNA"/>
</dbReference>
<dbReference type="RefSeq" id="WP_003547549.1">
    <property type="nucleotide sequence ID" value="NC_008380.1"/>
</dbReference>
<dbReference type="SMR" id="Q1MIE0"/>
<dbReference type="EnsemblBacteria" id="CAK07270">
    <property type="protein sequence ID" value="CAK07270"/>
    <property type="gene ID" value="RL1775"/>
</dbReference>
<dbReference type="GeneID" id="67484964"/>
<dbReference type="KEGG" id="rle:RL1775"/>
<dbReference type="eggNOG" id="COG0088">
    <property type="taxonomic scope" value="Bacteria"/>
</dbReference>
<dbReference type="HOGENOM" id="CLU_041575_5_1_5"/>
<dbReference type="Proteomes" id="UP000006575">
    <property type="component" value="Chromosome"/>
</dbReference>
<dbReference type="GO" id="GO:1990904">
    <property type="term" value="C:ribonucleoprotein complex"/>
    <property type="evidence" value="ECO:0007669"/>
    <property type="project" value="UniProtKB-KW"/>
</dbReference>
<dbReference type="GO" id="GO:0005840">
    <property type="term" value="C:ribosome"/>
    <property type="evidence" value="ECO:0007669"/>
    <property type="project" value="UniProtKB-KW"/>
</dbReference>
<dbReference type="GO" id="GO:0019843">
    <property type="term" value="F:rRNA binding"/>
    <property type="evidence" value="ECO:0007669"/>
    <property type="project" value="UniProtKB-UniRule"/>
</dbReference>
<dbReference type="GO" id="GO:0003735">
    <property type="term" value="F:structural constituent of ribosome"/>
    <property type="evidence" value="ECO:0007669"/>
    <property type="project" value="InterPro"/>
</dbReference>
<dbReference type="GO" id="GO:0006412">
    <property type="term" value="P:translation"/>
    <property type="evidence" value="ECO:0007669"/>
    <property type="project" value="UniProtKB-UniRule"/>
</dbReference>
<dbReference type="Gene3D" id="3.40.1370.10">
    <property type="match status" value="1"/>
</dbReference>
<dbReference type="HAMAP" id="MF_01328_B">
    <property type="entry name" value="Ribosomal_uL4_B"/>
    <property type="match status" value="1"/>
</dbReference>
<dbReference type="InterPro" id="IPR002136">
    <property type="entry name" value="Ribosomal_uL4"/>
</dbReference>
<dbReference type="InterPro" id="IPR013005">
    <property type="entry name" value="Ribosomal_uL4-like"/>
</dbReference>
<dbReference type="InterPro" id="IPR023574">
    <property type="entry name" value="Ribosomal_uL4_dom_sf"/>
</dbReference>
<dbReference type="NCBIfam" id="TIGR03953">
    <property type="entry name" value="rplD_bact"/>
    <property type="match status" value="1"/>
</dbReference>
<dbReference type="PANTHER" id="PTHR10746">
    <property type="entry name" value="50S RIBOSOMAL PROTEIN L4"/>
    <property type="match status" value="1"/>
</dbReference>
<dbReference type="PANTHER" id="PTHR10746:SF6">
    <property type="entry name" value="LARGE RIBOSOMAL SUBUNIT PROTEIN UL4M"/>
    <property type="match status" value="1"/>
</dbReference>
<dbReference type="Pfam" id="PF00573">
    <property type="entry name" value="Ribosomal_L4"/>
    <property type="match status" value="1"/>
</dbReference>
<dbReference type="SUPFAM" id="SSF52166">
    <property type="entry name" value="Ribosomal protein L4"/>
    <property type="match status" value="1"/>
</dbReference>
<comment type="function">
    <text evidence="1">One of the primary rRNA binding proteins, this protein initially binds near the 5'-end of the 23S rRNA. It is important during the early stages of 50S assembly. It makes multiple contacts with different domains of the 23S rRNA in the assembled 50S subunit and ribosome.</text>
</comment>
<comment type="function">
    <text evidence="1">Forms part of the polypeptide exit tunnel.</text>
</comment>
<comment type="subunit">
    <text evidence="1">Part of the 50S ribosomal subunit.</text>
</comment>
<comment type="similarity">
    <text evidence="1">Belongs to the universal ribosomal protein uL4 family.</text>
</comment>
<name>RL4_RHIJ3</name>
<accession>Q1MIE0</accession>
<evidence type="ECO:0000255" key="1">
    <source>
        <dbReference type="HAMAP-Rule" id="MF_01328"/>
    </source>
</evidence>
<evidence type="ECO:0000256" key="2">
    <source>
        <dbReference type="SAM" id="MobiDB-lite"/>
    </source>
</evidence>
<evidence type="ECO:0000305" key="3"/>
<gene>
    <name evidence="1" type="primary">rplD</name>
    <name type="ordered locus">RL1775</name>
</gene>
<protein>
    <recommendedName>
        <fullName evidence="1">Large ribosomal subunit protein uL4</fullName>
    </recommendedName>
    <alternativeName>
        <fullName evidence="3">50S ribosomal protein L4</fullName>
    </alternativeName>
</protein>
<feature type="chain" id="PRO_1000052478" description="Large ribosomal subunit protein uL4">
    <location>
        <begin position="1"/>
        <end position="206"/>
    </location>
</feature>
<feature type="region of interest" description="Disordered" evidence="2">
    <location>
        <begin position="63"/>
        <end position="97"/>
    </location>
</feature>
<feature type="compositionally biased region" description="Basic residues" evidence="2">
    <location>
        <begin position="64"/>
        <end position="77"/>
    </location>
</feature>